<keyword id="KW-0963">Cytoplasm</keyword>
<keyword id="KW-0413">Isomerase</keyword>
<keyword id="KW-1185">Reference proteome</keyword>
<keyword id="KW-0697">Rotamase</keyword>
<sequence length="114" mass="12211">MSETIEGNVQILRLSPGDSTNFPKPGDLVTIHYTGTLENGQKFDSSVDRGSPFQCNIGVGQVIKGWDAAIPKLSVGEKARLTIPGPYAYGPRGFPGLIPPNATLVFDVELLKIN</sequence>
<accession>Q6CX30</accession>
<protein>
    <recommendedName>
        <fullName>FK506-binding protein 1</fullName>
        <shortName>FKBP</shortName>
        <ecNumber>5.2.1.8</ecNumber>
    </recommendedName>
    <alternativeName>
        <fullName>Peptidyl-prolyl cis-trans isomerase</fullName>
        <shortName>PPIase</shortName>
    </alternativeName>
    <alternativeName>
        <fullName>Rapamycin-binding protein</fullName>
    </alternativeName>
</protein>
<organism>
    <name type="scientific">Kluyveromyces lactis (strain ATCC 8585 / CBS 2359 / DSM 70799 / NBRC 1267 / NRRL Y-1140 / WM37)</name>
    <name type="common">Yeast</name>
    <name type="synonym">Candida sphaerica</name>
    <dbReference type="NCBI Taxonomy" id="284590"/>
    <lineage>
        <taxon>Eukaryota</taxon>
        <taxon>Fungi</taxon>
        <taxon>Dikarya</taxon>
        <taxon>Ascomycota</taxon>
        <taxon>Saccharomycotina</taxon>
        <taxon>Saccharomycetes</taxon>
        <taxon>Saccharomycetales</taxon>
        <taxon>Saccharomycetaceae</taxon>
        <taxon>Kluyveromyces</taxon>
    </lineage>
</organism>
<evidence type="ECO:0000250" key="1"/>
<evidence type="ECO:0000255" key="2">
    <source>
        <dbReference type="PROSITE-ProRule" id="PRU00277"/>
    </source>
</evidence>
<evidence type="ECO:0000305" key="3"/>
<comment type="function">
    <text evidence="1">PPIases accelerate the folding of proteins. It catalyzes the cis-trans isomerization of proline imidic peptide bonds in oligopeptides (By similarity).</text>
</comment>
<comment type="catalytic activity">
    <reaction>
        <text>[protein]-peptidylproline (omega=180) = [protein]-peptidylproline (omega=0)</text>
        <dbReference type="Rhea" id="RHEA:16237"/>
        <dbReference type="Rhea" id="RHEA-COMP:10747"/>
        <dbReference type="Rhea" id="RHEA-COMP:10748"/>
        <dbReference type="ChEBI" id="CHEBI:83833"/>
        <dbReference type="ChEBI" id="CHEBI:83834"/>
        <dbReference type="EC" id="5.2.1.8"/>
    </reaction>
</comment>
<comment type="activity regulation">
    <text evidence="1">Inhibited by both FK506 and rapamycin.</text>
</comment>
<comment type="subcellular location">
    <subcellularLocation>
        <location evidence="1">Cytoplasm</location>
    </subcellularLocation>
</comment>
<comment type="similarity">
    <text evidence="3">Belongs to the FKBP-type PPIase family. FKBP1 subfamily.</text>
</comment>
<feature type="chain" id="PRO_0000233328" description="FK506-binding protein 1">
    <location>
        <begin position="1"/>
        <end position="114"/>
    </location>
</feature>
<feature type="domain" description="PPIase FKBP-type" evidence="2">
    <location>
        <begin position="26"/>
        <end position="114"/>
    </location>
</feature>
<reference key="1">
    <citation type="journal article" date="2004" name="Nature">
        <title>Genome evolution in yeasts.</title>
        <authorList>
            <person name="Dujon B."/>
            <person name="Sherman D."/>
            <person name="Fischer G."/>
            <person name="Durrens P."/>
            <person name="Casaregola S."/>
            <person name="Lafontaine I."/>
            <person name="de Montigny J."/>
            <person name="Marck C."/>
            <person name="Neuveglise C."/>
            <person name="Talla E."/>
            <person name="Goffard N."/>
            <person name="Frangeul L."/>
            <person name="Aigle M."/>
            <person name="Anthouard V."/>
            <person name="Babour A."/>
            <person name="Barbe V."/>
            <person name="Barnay S."/>
            <person name="Blanchin S."/>
            <person name="Beckerich J.-M."/>
            <person name="Beyne E."/>
            <person name="Bleykasten C."/>
            <person name="Boisrame A."/>
            <person name="Boyer J."/>
            <person name="Cattolico L."/>
            <person name="Confanioleri F."/>
            <person name="de Daruvar A."/>
            <person name="Despons L."/>
            <person name="Fabre E."/>
            <person name="Fairhead C."/>
            <person name="Ferry-Dumazet H."/>
            <person name="Groppi A."/>
            <person name="Hantraye F."/>
            <person name="Hennequin C."/>
            <person name="Jauniaux N."/>
            <person name="Joyet P."/>
            <person name="Kachouri R."/>
            <person name="Kerrest A."/>
            <person name="Koszul R."/>
            <person name="Lemaire M."/>
            <person name="Lesur I."/>
            <person name="Ma L."/>
            <person name="Muller H."/>
            <person name="Nicaud J.-M."/>
            <person name="Nikolski M."/>
            <person name="Oztas S."/>
            <person name="Ozier-Kalogeropoulos O."/>
            <person name="Pellenz S."/>
            <person name="Potier S."/>
            <person name="Richard G.-F."/>
            <person name="Straub M.-L."/>
            <person name="Suleau A."/>
            <person name="Swennen D."/>
            <person name="Tekaia F."/>
            <person name="Wesolowski-Louvel M."/>
            <person name="Westhof E."/>
            <person name="Wirth B."/>
            <person name="Zeniou-Meyer M."/>
            <person name="Zivanovic Y."/>
            <person name="Bolotin-Fukuhara M."/>
            <person name="Thierry A."/>
            <person name="Bouchier C."/>
            <person name="Caudron B."/>
            <person name="Scarpelli C."/>
            <person name="Gaillardin C."/>
            <person name="Weissenbach J."/>
            <person name="Wincker P."/>
            <person name="Souciet J.-L."/>
        </authorList>
    </citation>
    <scope>NUCLEOTIDE SEQUENCE [LARGE SCALE GENOMIC DNA]</scope>
    <source>
        <strain>ATCC 8585 / CBS 2359 / DSM 70799 / NBRC 1267 / NRRL Y-1140 / WM37</strain>
    </source>
</reference>
<dbReference type="EC" id="5.2.1.8"/>
<dbReference type="EMBL" id="CR382121">
    <property type="protein sequence ID" value="CAH03097.1"/>
    <property type="molecule type" value="Genomic_DNA"/>
</dbReference>
<dbReference type="RefSeq" id="XP_451509.1">
    <property type="nucleotide sequence ID" value="XM_451509.1"/>
</dbReference>
<dbReference type="SMR" id="Q6CX30"/>
<dbReference type="FunCoup" id="Q6CX30">
    <property type="interactions" value="412"/>
</dbReference>
<dbReference type="STRING" id="284590.Q6CX30"/>
<dbReference type="PaxDb" id="284590-Q6CX30"/>
<dbReference type="KEGG" id="kla:KLLA0_A11704g"/>
<dbReference type="eggNOG" id="KOG0544">
    <property type="taxonomic scope" value="Eukaryota"/>
</dbReference>
<dbReference type="HOGENOM" id="CLU_013615_12_1_1"/>
<dbReference type="InParanoid" id="Q6CX30"/>
<dbReference type="OMA" id="EQFDASW"/>
<dbReference type="Proteomes" id="UP000000598">
    <property type="component" value="Chromosome A"/>
</dbReference>
<dbReference type="GO" id="GO:0005737">
    <property type="term" value="C:cytoplasm"/>
    <property type="evidence" value="ECO:0007669"/>
    <property type="project" value="UniProtKB-SubCell"/>
</dbReference>
<dbReference type="GO" id="GO:0003755">
    <property type="term" value="F:peptidyl-prolyl cis-trans isomerase activity"/>
    <property type="evidence" value="ECO:0007669"/>
    <property type="project" value="UniProtKB-KW"/>
</dbReference>
<dbReference type="FunFam" id="3.10.50.40:FF:000025">
    <property type="entry name" value="Peptidylprolyl isomerase"/>
    <property type="match status" value="1"/>
</dbReference>
<dbReference type="Gene3D" id="3.10.50.40">
    <property type="match status" value="1"/>
</dbReference>
<dbReference type="InterPro" id="IPR050689">
    <property type="entry name" value="FKBP-type_PPIase"/>
</dbReference>
<dbReference type="InterPro" id="IPR046357">
    <property type="entry name" value="PPIase_dom_sf"/>
</dbReference>
<dbReference type="InterPro" id="IPR001179">
    <property type="entry name" value="PPIase_FKBP_dom"/>
</dbReference>
<dbReference type="PANTHER" id="PTHR10516:SF443">
    <property type="entry name" value="FK506-BINDING PROTEIN 59-RELATED"/>
    <property type="match status" value="1"/>
</dbReference>
<dbReference type="PANTHER" id="PTHR10516">
    <property type="entry name" value="PEPTIDYL-PROLYL CIS-TRANS ISOMERASE"/>
    <property type="match status" value="1"/>
</dbReference>
<dbReference type="Pfam" id="PF00254">
    <property type="entry name" value="FKBP_C"/>
    <property type="match status" value="1"/>
</dbReference>
<dbReference type="SUPFAM" id="SSF54534">
    <property type="entry name" value="FKBP-like"/>
    <property type="match status" value="1"/>
</dbReference>
<dbReference type="PROSITE" id="PS50059">
    <property type="entry name" value="FKBP_PPIASE"/>
    <property type="match status" value="1"/>
</dbReference>
<proteinExistence type="inferred from homology"/>
<name>FKBP_KLULA</name>
<gene>
    <name type="primary">FPR1</name>
    <name type="ordered locus">KLLA0A11704g</name>
</gene>